<proteinExistence type="inferred from homology"/>
<accession>Q2W2K7</accession>
<gene>
    <name evidence="1" type="primary">rplR</name>
    <name type="ordered locus">amb3114</name>
</gene>
<evidence type="ECO:0000255" key="1">
    <source>
        <dbReference type="HAMAP-Rule" id="MF_01337"/>
    </source>
</evidence>
<evidence type="ECO:0000305" key="2"/>
<reference key="1">
    <citation type="journal article" date="2005" name="DNA Res.">
        <title>Complete genome sequence of the facultative anaerobic magnetotactic bacterium Magnetospirillum sp. strain AMB-1.</title>
        <authorList>
            <person name="Matsunaga T."/>
            <person name="Okamura Y."/>
            <person name="Fukuda Y."/>
            <person name="Wahyudi A.T."/>
            <person name="Murase Y."/>
            <person name="Takeyama H."/>
        </authorList>
    </citation>
    <scope>NUCLEOTIDE SEQUENCE [LARGE SCALE GENOMIC DNA]</scope>
    <source>
        <strain>ATCC 700264 / AMB-1</strain>
    </source>
</reference>
<name>RL18_PARM1</name>
<comment type="function">
    <text evidence="1">This is one of the proteins that bind and probably mediate the attachment of the 5S RNA into the large ribosomal subunit, where it forms part of the central protuberance.</text>
</comment>
<comment type="subunit">
    <text evidence="1">Part of the 50S ribosomal subunit; part of the 5S rRNA/L5/L18/L25 subcomplex. Contacts the 5S and 23S rRNAs.</text>
</comment>
<comment type="similarity">
    <text evidence="1">Belongs to the universal ribosomal protein uL18 family.</text>
</comment>
<dbReference type="EMBL" id="AP007255">
    <property type="protein sequence ID" value="BAE51918.1"/>
    <property type="molecule type" value="Genomic_DNA"/>
</dbReference>
<dbReference type="RefSeq" id="WP_011385488.1">
    <property type="nucleotide sequence ID" value="NC_007626.1"/>
</dbReference>
<dbReference type="SMR" id="Q2W2K7"/>
<dbReference type="STRING" id="342108.amb3114"/>
<dbReference type="KEGG" id="mag:amb3114"/>
<dbReference type="HOGENOM" id="CLU_098841_0_1_5"/>
<dbReference type="OrthoDB" id="9810939at2"/>
<dbReference type="Proteomes" id="UP000007058">
    <property type="component" value="Chromosome"/>
</dbReference>
<dbReference type="GO" id="GO:0022625">
    <property type="term" value="C:cytosolic large ribosomal subunit"/>
    <property type="evidence" value="ECO:0007669"/>
    <property type="project" value="TreeGrafter"/>
</dbReference>
<dbReference type="GO" id="GO:0008097">
    <property type="term" value="F:5S rRNA binding"/>
    <property type="evidence" value="ECO:0007669"/>
    <property type="project" value="TreeGrafter"/>
</dbReference>
<dbReference type="GO" id="GO:0003735">
    <property type="term" value="F:structural constituent of ribosome"/>
    <property type="evidence" value="ECO:0007669"/>
    <property type="project" value="InterPro"/>
</dbReference>
<dbReference type="GO" id="GO:0006412">
    <property type="term" value="P:translation"/>
    <property type="evidence" value="ECO:0007669"/>
    <property type="project" value="UniProtKB-UniRule"/>
</dbReference>
<dbReference type="CDD" id="cd00432">
    <property type="entry name" value="Ribosomal_L18_L5e"/>
    <property type="match status" value="1"/>
</dbReference>
<dbReference type="FunFam" id="3.30.420.100:FF:000001">
    <property type="entry name" value="50S ribosomal protein L18"/>
    <property type="match status" value="1"/>
</dbReference>
<dbReference type="Gene3D" id="3.30.420.100">
    <property type="match status" value="1"/>
</dbReference>
<dbReference type="HAMAP" id="MF_01337_B">
    <property type="entry name" value="Ribosomal_uL18_B"/>
    <property type="match status" value="1"/>
</dbReference>
<dbReference type="InterPro" id="IPR004389">
    <property type="entry name" value="Ribosomal_uL18_bac-type"/>
</dbReference>
<dbReference type="InterPro" id="IPR005484">
    <property type="entry name" value="Ribosomal_uL18_bac/euk"/>
</dbReference>
<dbReference type="NCBIfam" id="TIGR00060">
    <property type="entry name" value="L18_bact"/>
    <property type="match status" value="1"/>
</dbReference>
<dbReference type="PANTHER" id="PTHR12899">
    <property type="entry name" value="39S RIBOSOMAL PROTEIN L18, MITOCHONDRIAL"/>
    <property type="match status" value="1"/>
</dbReference>
<dbReference type="PANTHER" id="PTHR12899:SF3">
    <property type="entry name" value="LARGE RIBOSOMAL SUBUNIT PROTEIN UL18M"/>
    <property type="match status" value="1"/>
</dbReference>
<dbReference type="Pfam" id="PF00861">
    <property type="entry name" value="Ribosomal_L18p"/>
    <property type="match status" value="1"/>
</dbReference>
<dbReference type="SUPFAM" id="SSF53137">
    <property type="entry name" value="Translational machinery components"/>
    <property type="match status" value="1"/>
</dbReference>
<sequence>MMTPKNLFERRKRRARQSIKKKGNGRIRLSVFRSGKNIYVQVIDDLNGVTLAAASTLDKELKGNLKTGADKEAAAAVGKLIAERAKAAGITEVVFDRGGYIYHGRVKALADAAREGGLSF</sequence>
<keyword id="KW-0687">Ribonucleoprotein</keyword>
<keyword id="KW-0689">Ribosomal protein</keyword>
<keyword id="KW-0694">RNA-binding</keyword>
<keyword id="KW-0699">rRNA-binding</keyword>
<protein>
    <recommendedName>
        <fullName evidence="1">Large ribosomal subunit protein uL18</fullName>
    </recommendedName>
    <alternativeName>
        <fullName evidence="2">50S ribosomal protein L18</fullName>
    </alternativeName>
</protein>
<feature type="chain" id="PRO_0000251325" description="Large ribosomal subunit protein uL18">
    <location>
        <begin position="1"/>
        <end position="120"/>
    </location>
</feature>
<organism>
    <name type="scientific">Paramagnetospirillum magneticum (strain ATCC 700264 / AMB-1)</name>
    <name type="common">Magnetospirillum magneticum</name>
    <dbReference type="NCBI Taxonomy" id="342108"/>
    <lineage>
        <taxon>Bacteria</taxon>
        <taxon>Pseudomonadati</taxon>
        <taxon>Pseudomonadota</taxon>
        <taxon>Alphaproteobacteria</taxon>
        <taxon>Rhodospirillales</taxon>
        <taxon>Magnetospirillaceae</taxon>
        <taxon>Paramagnetospirillum</taxon>
    </lineage>
</organism>